<evidence type="ECO:0000255" key="1">
    <source>
        <dbReference type="HAMAP-Rule" id="MF_00736"/>
    </source>
</evidence>
<evidence type="ECO:0000305" key="2"/>
<sequence length="144" mass="14970">MKKITGIVKLQLPAGKATPAPPVGPALGQYGANIMEFTKAFNAQTADKGDAIIPVEITIFADRSFTFITKTPPMSYLIRKAAGLSKGSATPNKAKVGKLNWEQVLEIAKTKMPDLNAGSLEAAANTVAGTARSMGVTIEGAPNA</sequence>
<accession>C1D0S6</accession>
<feature type="chain" id="PRO_1000212767" description="Large ribosomal subunit protein uL11">
    <location>
        <begin position="1"/>
        <end position="144"/>
    </location>
</feature>
<comment type="function">
    <text evidence="1">Forms part of the ribosomal stalk which helps the ribosome interact with GTP-bound translation factors.</text>
</comment>
<comment type="subunit">
    <text evidence="1">Part of the ribosomal stalk of the 50S ribosomal subunit. Interacts with L10 and the large rRNA to form the base of the stalk. L10 forms an elongated spine to which L12 dimers bind in a sequential fashion forming a multimeric L10(L12)X complex.</text>
</comment>
<comment type="PTM">
    <text evidence="1">One or more lysine residues are methylated.</text>
</comment>
<comment type="similarity">
    <text evidence="1">Belongs to the universal ribosomal protein uL11 family.</text>
</comment>
<protein>
    <recommendedName>
        <fullName evidence="1">Large ribosomal subunit protein uL11</fullName>
    </recommendedName>
    <alternativeName>
        <fullName evidence="2">50S ribosomal protein L11</fullName>
    </alternativeName>
</protein>
<name>RL11_DEIDV</name>
<dbReference type="EMBL" id="CP001114">
    <property type="protein sequence ID" value="ACO45450.1"/>
    <property type="molecule type" value="Genomic_DNA"/>
</dbReference>
<dbReference type="RefSeq" id="WP_012692573.1">
    <property type="nucleotide sequence ID" value="NC_012526.1"/>
</dbReference>
<dbReference type="SMR" id="C1D0S6"/>
<dbReference type="STRING" id="546414.Deide_06080"/>
<dbReference type="PaxDb" id="546414-Deide_06080"/>
<dbReference type="KEGG" id="ddr:Deide_06080"/>
<dbReference type="eggNOG" id="COG0080">
    <property type="taxonomic scope" value="Bacteria"/>
</dbReference>
<dbReference type="HOGENOM" id="CLU_074237_2_1_0"/>
<dbReference type="OrthoDB" id="9802408at2"/>
<dbReference type="Proteomes" id="UP000002208">
    <property type="component" value="Chromosome"/>
</dbReference>
<dbReference type="GO" id="GO:0022625">
    <property type="term" value="C:cytosolic large ribosomal subunit"/>
    <property type="evidence" value="ECO:0007669"/>
    <property type="project" value="TreeGrafter"/>
</dbReference>
<dbReference type="GO" id="GO:0070180">
    <property type="term" value="F:large ribosomal subunit rRNA binding"/>
    <property type="evidence" value="ECO:0007669"/>
    <property type="project" value="UniProtKB-UniRule"/>
</dbReference>
<dbReference type="GO" id="GO:0003735">
    <property type="term" value="F:structural constituent of ribosome"/>
    <property type="evidence" value="ECO:0007669"/>
    <property type="project" value="InterPro"/>
</dbReference>
<dbReference type="GO" id="GO:0006412">
    <property type="term" value="P:translation"/>
    <property type="evidence" value="ECO:0007669"/>
    <property type="project" value="UniProtKB-UniRule"/>
</dbReference>
<dbReference type="CDD" id="cd00349">
    <property type="entry name" value="Ribosomal_L11"/>
    <property type="match status" value="1"/>
</dbReference>
<dbReference type="FunFam" id="1.10.10.250:FF:000001">
    <property type="entry name" value="50S ribosomal protein L11"/>
    <property type="match status" value="1"/>
</dbReference>
<dbReference type="FunFam" id="3.30.1550.10:FF:000001">
    <property type="entry name" value="50S ribosomal protein L11"/>
    <property type="match status" value="1"/>
</dbReference>
<dbReference type="Gene3D" id="1.10.10.250">
    <property type="entry name" value="Ribosomal protein L11, C-terminal domain"/>
    <property type="match status" value="1"/>
</dbReference>
<dbReference type="Gene3D" id="3.30.1550.10">
    <property type="entry name" value="Ribosomal protein L11/L12, N-terminal domain"/>
    <property type="match status" value="1"/>
</dbReference>
<dbReference type="HAMAP" id="MF_00736">
    <property type="entry name" value="Ribosomal_uL11"/>
    <property type="match status" value="1"/>
</dbReference>
<dbReference type="InterPro" id="IPR000911">
    <property type="entry name" value="Ribosomal_uL11"/>
</dbReference>
<dbReference type="InterPro" id="IPR006519">
    <property type="entry name" value="Ribosomal_uL11_bac-typ"/>
</dbReference>
<dbReference type="InterPro" id="IPR020783">
    <property type="entry name" value="Ribosomal_uL11_C"/>
</dbReference>
<dbReference type="InterPro" id="IPR036769">
    <property type="entry name" value="Ribosomal_uL11_C_sf"/>
</dbReference>
<dbReference type="InterPro" id="IPR020785">
    <property type="entry name" value="Ribosomal_uL11_CS"/>
</dbReference>
<dbReference type="InterPro" id="IPR020784">
    <property type="entry name" value="Ribosomal_uL11_N"/>
</dbReference>
<dbReference type="InterPro" id="IPR036796">
    <property type="entry name" value="Ribosomal_uL11_N_sf"/>
</dbReference>
<dbReference type="NCBIfam" id="TIGR01632">
    <property type="entry name" value="L11_bact"/>
    <property type="match status" value="1"/>
</dbReference>
<dbReference type="PANTHER" id="PTHR11661">
    <property type="entry name" value="60S RIBOSOMAL PROTEIN L12"/>
    <property type="match status" value="1"/>
</dbReference>
<dbReference type="PANTHER" id="PTHR11661:SF1">
    <property type="entry name" value="LARGE RIBOSOMAL SUBUNIT PROTEIN UL11M"/>
    <property type="match status" value="1"/>
</dbReference>
<dbReference type="Pfam" id="PF00298">
    <property type="entry name" value="Ribosomal_L11"/>
    <property type="match status" value="1"/>
</dbReference>
<dbReference type="Pfam" id="PF03946">
    <property type="entry name" value="Ribosomal_L11_N"/>
    <property type="match status" value="1"/>
</dbReference>
<dbReference type="SMART" id="SM00649">
    <property type="entry name" value="RL11"/>
    <property type="match status" value="1"/>
</dbReference>
<dbReference type="SUPFAM" id="SSF54747">
    <property type="entry name" value="Ribosomal L11/L12e N-terminal domain"/>
    <property type="match status" value="1"/>
</dbReference>
<dbReference type="SUPFAM" id="SSF46906">
    <property type="entry name" value="Ribosomal protein L11, C-terminal domain"/>
    <property type="match status" value="1"/>
</dbReference>
<dbReference type="PROSITE" id="PS00359">
    <property type="entry name" value="RIBOSOMAL_L11"/>
    <property type="match status" value="1"/>
</dbReference>
<gene>
    <name evidence="1" type="primary">rplK</name>
    <name type="ordered locus">Deide_06080</name>
</gene>
<organism>
    <name type="scientific">Deinococcus deserti (strain DSM 17065 / CIP 109153 / LMG 22923 / VCD115)</name>
    <dbReference type="NCBI Taxonomy" id="546414"/>
    <lineage>
        <taxon>Bacteria</taxon>
        <taxon>Thermotogati</taxon>
        <taxon>Deinococcota</taxon>
        <taxon>Deinococci</taxon>
        <taxon>Deinococcales</taxon>
        <taxon>Deinococcaceae</taxon>
        <taxon>Deinococcus</taxon>
    </lineage>
</organism>
<reference key="1">
    <citation type="journal article" date="2009" name="PLoS Genet.">
        <title>Alliance of proteomics and genomics to unravel the specificities of Sahara bacterium Deinococcus deserti.</title>
        <authorList>
            <person name="de Groot A."/>
            <person name="Dulermo R."/>
            <person name="Ortet P."/>
            <person name="Blanchard L."/>
            <person name="Guerin P."/>
            <person name="Fernandez B."/>
            <person name="Vacherie B."/>
            <person name="Dossat C."/>
            <person name="Jolivet E."/>
            <person name="Siguier P."/>
            <person name="Chandler M."/>
            <person name="Barakat M."/>
            <person name="Dedieu A."/>
            <person name="Barbe V."/>
            <person name="Heulin T."/>
            <person name="Sommer S."/>
            <person name="Achouak W."/>
            <person name="Armengaud J."/>
        </authorList>
    </citation>
    <scope>NUCLEOTIDE SEQUENCE [LARGE SCALE GENOMIC DNA]</scope>
    <source>
        <strain>DSM 17065 / CIP 109153 / LMG 22923 / VCD115</strain>
    </source>
</reference>
<proteinExistence type="inferred from homology"/>
<keyword id="KW-0488">Methylation</keyword>
<keyword id="KW-1185">Reference proteome</keyword>
<keyword id="KW-0687">Ribonucleoprotein</keyword>
<keyword id="KW-0689">Ribosomal protein</keyword>
<keyword id="KW-0694">RNA-binding</keyword>
<keyword id="KW-0699">rRNA-binding</keyword>